<feature type="chain" id="PRO_1000078612" description="Porphobilinogen deaminase">
    <location>
        <begin position="1"/>
        <end position="312"/>
    </location>
</feature>
<feature type="modified residue" description="S-(dipyrrolylmethanemethyl)cysteine" evidence="1">
    <location>
        <position position="235"/>
    </location>
</feature>
<sequence>MIRIGTRGSLLATTQAGTIRDALIAAGHDAELVIISTEGDRRADEPIADIGVGVFTAALREAIADNVVDAAVHSYKDLPTAVDPRFMIAATPVREDARDALVARDGMVLGELPAGSVIGTSSPRRVAQLKALGLGLEIRPLRGNLDTRLNRVSSGELDAIVVAKAGLSRIGRLEVVTETLEPVQMLPAPAQGALAIECRAGDTALAQLLAELDDADTRAAVTAERTLLAELEAGCSAPVGAIAEVVESIDEDGRVFEELSLRGCVATLDGSDVIRASGIGSPDRARELGLSVAAELFDLGARDLLDERGRDT</sequence>
<comment type="function">
    <text evidence="1">Tetrapolymerization of the monopyrrole PBG into the hydroxymethylbilane pre-uroporphyrinogen in several discrete steps.</text>
</comment>
<comment type="catalytic activity">
    <reaction evidence="1">
        <text>4 porphobilinogen + H2O = hydroxymethylbilane + 4 NH4(+)</text>
        <dbReference type="Rhea" id="RHEA:13185"/>
        <dbReference type="ChEBI" id="CHEBI:15377"/>
        <dbReference type="ChEBI" id="CHEBI:28938"/>
        <dbReference type="ChEBI" id="CHEBI:57845"/>
        <dbReference type="ChEBI" id="CHEBI:58126"/>
        <dbReference type="EC" id="2.5.1.61"/>
    </reaction>
</comment>
<comment type="cofactor">
    <cofactor evidence="1">
        <name>dipyrromethane</name>
        <dbReference type="ChEBI" id="CHEBI:60342"/>
    </cofactor>
    <text evidence="1">Binds 1 dipyrromethane group covalently.</text>
</comment>
<comment type="pathway">
    <text evidence="1">Porphyrin-containing compound metabolism; protoporphyrin-IX biosynthesis; coproporphyrinogen-III from 5-aminolevulinate: step 2/4.</text>
</comment>
<comment type="subunit">
    <text evidence="1">Monomer.</text>
</comment>
<comment type="miscellaneous">
    <text evidence="1">The porphobilinogen subunits are added to the dipyrromethane group.</text>
</comment>
<comment type="similarity">
    <text evidence="1">Belongs to the HMBS family.</text>
</comment>
<accession>A4T340</accession>
<reference key="1">
    <citation type="submission" date="2007-04" db="EMBL/GenBank/DDBJ databases">
        <title>Complete sequence of chromosome of Mycobacterium gilvum PYR-GCK.</title>
        <authorList>
            <consortium name="US DOE Joint Genome Institute"/>
            <person name="Copeland A."/>
            <person name="Lucas S."/>
            <person name="Lapidus A."/>
            <person name="Barry K."/>
            <person name="Detter J.C."/>
            <person name="Glavina del Rio T."/>
            <person name="Hammon N."/>
            <person name="Israni S."/>
            <person name="Dalin E."/>
            <person name="Tice H."/>
            <person name="Pitluck S."/>
            <person name="Chain P."/>
            <person name="Malfatti S."/>
            <person name="Shin M."/>
            <person name="Vergez L."/>
            <person name="Schmutz J."/>
            <person name="Larimer F."/>
            <person name="Land M."/>
            <person name="Hauser L."/>
            <person name="Kyrpides N."/>
            <person name="Mikhailova N."/>
            <person name="Miller C."/>
            <person name="Richardson P."/>
        </authorList>
    </citation>
    <scope>NUCLEOTIDE SEQUENCE [LARGE SCALE GENOMIC DNA]</scope>
    <source>
        <strain>PYR-GCK</strain>
    </source>
</reference>
<proteinExistence type="inferred from homology"/>
<organism>
    <name type="scientific">Mycolicibacterium gilvum (strain PYR-GCK)</name>
    <name type="common">Mycobacterium gilvum (strain PYR-GCK)</name>
    <dbReference type="NCBI Taxonomy" id="350054"/>
    <lineage>
        <taxon>Bacteria</taxon>
        <taxon>Bacillati</taxon>
        <taxon>Actinomycetota</taxon>
        <taxon>Actinomycetes</taxon>
        <taxon>Mycobacteriales</taxon>
        <taxon>Mycobacteriaceae</taxon>
        <taxon>Mycolicibacterium</taxon>
    </lineage>
</organism>
<dbReference type="EC" id="2.5.1.61" evidence="1"/>
<dbReference type="EMBL" id="CP000656">
    <property type="protein sequence ID" value="ABP42562.1"/>
    <property type="molecule type" value="Genomic_DNA"/>
</dbReference>
<dbReference type="SMR" id="A4T340"/>
<dbReference type="STRING" id="350054.Mflv_0066"/>
<dbReference type="KEGG" id="mgi:Mflv_0066"/>
<dbReference type="eggNOG" id="COG0181">
    <property type="taxonomic scope" value="Bacteria"/>
</dbReference>
<dbReference type="HOGENOM" id="CLU_019704_0_2_11"/>
<dbReference type="OrthoDB" id="9810298at2"/>
<dbReference type="UniPathway" id="UPA00251">
    <property type="reaction ID" value="UER00319"/>
</dbReference>
<dbReference type="GO" id="GO:0005737">
    <property type="term" value="C:cytoplasm"/>
    <property type="evidence" value="ECO:0007669"/>
    <property type="project" value="TreeGrafter"/>
</dbReference>
<dbReference type="GO" id="GO:0004418">
    <property type="term" value="F:hydroxymethylbilane synthase activity"/>
    <property type="evidence" value="ECO:0007669"/>
    <property type="project" value="UniProtKB-UniRule"/>
</dbReference>
<dbReference type="GO" id="GO:0006782">
    <property type="term" value="P:protoporphyrinogen IX biosynthetic process"/>
    <property type="evidence" value="ECO:0007669"/>
    <property type="project" value="UniProtKB-UniRule"/>
</dbReference>
<dbReference type="FunFam" id="3.30.160.40:FF:000001">
    <property type="entry name" value="Porphobilinogen deaminase"/>
    <property type="match status" value="1"/>
</dbReference>
<dbReference type="FunFam" id="3.40.190.10:FF:000005">
    <property type="entry name" value="Porphobilinogen deaminase"/>
    <property type="match status" value="1"/>
</dbReference>
<dbReference type="Gene3D" id="3.40.190.10">
    <property type="entry name" value="Periplasmic binding protein-like II"/>
    <property type="match status" value="2"/>
</dbReference>
<dbReference type="Gene3D" id="3.30.160.40">
    <property type="entry name" value="Porphobilinogen deaminase, C-terminal domain"/>
    <property type="match status" value="1"/>
</dbReference>
<dbReference type="HAMAP" id="MF_00260">
    <property type="entry name" value="Porphobil_deam"/>
    <property type="match status" value="1"/>
</dbReference>
<dbReference type="InterPro" id="IPR000860">
    <property type="entry name" value="HemC"/>
</dbReference>
<dbReference type="InterPro" id="IPR022419">
    <property type="entry name" value="Porphobilin_deaminase_cofac_BS"/>
</dbReference>
<dbReference type="InterPro" id="IPR022417">
    <property type="entry name" value="Porphobilin_deaminase_N"/>
</dbReference>
<dbReference type="InterPro" id="IPR022418">
    <property type="entry name" value="Porphobilinogen_deaminase_C"/>
</dbReference>
<dbReference type="InterPro" id="IPR036803">
    <property type="entry name" value="Porphobilinogen_deaminase_C_sf"/>
</dbReference>
<dbReference type="NCBIfam" id="TIGR00212">
    <property type="entry name" value="hemC"/>
    <property type="match status" value="1"/>
</dbReference>
<dbReference type="PANTHER" id="PTHR11557">
    <property type="entry name" value="PORPHOBILINOGEN DEAMINASE"/>
    <property type="match status" value="1"/>
</dbReference>
<dbReference type="PANTHER" id="PTHR11557:SF0">
    <property type="entry name" value="PORPHOBILINOGEN DEAMINASE"/>
    <property type="match status" value="1"/>
</dbReference>
<dbReference type="Pfam" id="PF01379">
    <property type="entry name" value="Porphobil_deam"/>
    <property type="match status" value="1"/>
</dbReference>
<dbReference type="Pfam" id="PF03900">
    <property type="entry name" value="Porphobil_deamC"/>
    <property type="match status" value="1"/>
</dbReference>
<dbReference type="PIRSF" id="PIRSF001438">
    <property type="entry name" value="4pyrrol_synth_OHMeBilane_synth"/>
    <property type="match status" value="1"/>
</dbReference>
<dbReference type="PRINTS" id="PR00151">
    <property type="entry name" value="PORPHBDMNASE"/>
</dbReference>
<dbReference type="SUPFAM" id="SSF53850">
    <property type="entry name" value="Periplasmic binding protein-like II"/>
    <property type="match status" value="1"/>
</dbReference>
<dbReference type="SUPFAM" id="SSF54782">
    <property type="entry name" value="Porphobilinogen deaminase (hydroxymethylbilane synthase), C-terminal domain"/>
    <property type="match status" value="1"/>
</dbReference>
<dbReference type="PROSITE" id="PS00533">
    <property type="entry name" value="PORPHOBILINOGEN_DEAM"/>
    <property type="match status" value="1"/>
</dbReference>
<name>HEM3_MYCGI</name>
<protein>
    <recommendedName>
        <fullName evidence="1">Porphobilinogen deaminase</fullName>
        <shortName evidence="1">PBG</shortName>
        <ecNumber evidence="1">2.5.1.61</ecNumber>
    </recommendedName>
    <alternativeName>
        <fullName evidence="1">Hydroxymethylbilane synthase</fullName>
        <shortName evidence="1">HMBS</shortName>
    </alternativeName>
    <alternativeName>
        <fullName evidence="1">Pre-uroporphyrinogen synthase</fullName>
    </alternativeName>
</protein>
<evidence type="ECO:0000255" key="1">
    <source>
        <dbReference type="HAMAP-Rule" id="MF_00260"/>
    </source>
</evidence>
<gene>
    <name evidence="1" type="primary">hemC</name>
    <name type="ordered locus">Mflv_0066</name>
</gene>
<keyword id="KW-0627">Porphyrin biosynthesis</keyword>
<keyword id="KW-0808">Transferase</keyword>